<name>YO25_CAEEL</name>
<organism>
    <name type="scientific">Caenorhabditis elegans</name>
    <dbReference type="NCBI Taxonomy" id="6239"/>
    <lineage>
        <taxon>Eukaryota</taxon>
        <taxon>Metazoa</taxon>
        <taxon>Ecdysozoa</taxon>
        <taxon>Nematoda</taxon>
        <taxon>Chromadorea</taxon>
        <taxon>Rhabditida</taxon>
        <taxon>Rhabditina</taxon>
        <taxon>Rhabditomorpha</taxon>
        <taxon>Rhabditoidea</taxon>
        <taxon>Rhabditidae</taxon>
        <taxon>Peloderinae</taxon>
        <taxon>Caenorhabditis</taxon>
    </lineage>
</organism>
<reference key="1">
    <citation type="journal article" date="1994" name="Nature">
        <title>2.2 Mb of contiguous nucleotide sequence from chromosome III of C. elegans.</title>
        <authorList>
            <person name="Wilson R."/>
            <person name="Ainscough R."/>
            <person name="Anderson K."/>
            <person name="Baynes C."/>
            <person name="Berks M."/>
            <person name="Bonfield J."/>
            <person name="Burton J."/>
            <person name="Connell M."/>
            <person name="Copsey T."/>
            <person name="Cooper J."/>
            <person name="Coulson A."/>
            <person name="Craxton M."/>
            <person name="Dear S."/>
            <person name="Du Z."/>
            <person name="Durbin R."/>
            <person name="Favello A."/>
            <person name="Fraser A."/>
            <person name="Fulton L."/>
            <person name="Gardner A."/>
            <person name="Green P."/>
            <person name="Hawkins T."/>
            <person name="Hillier L."/>
            <person name="Jier M."/>
            <person name="Johnston L."/>
            <person name="Jones M."/>
            <person name="Kershaw J."/>
            <person name="Kirsten J."/>
            <person name="Laisster N."/>
            <person name="Latreille P."/>
            <person name="Lightning J."/>
            <person name="Lloyd C."/>
            <person name="Mortimore B."/>
            <person name="O'Callaghan M."/>
            <person name="Parsons J."/>
            <person name="Percy C."/>
            <person name="Rifken L."/>
            <person name="Roopra A."/>
            <person name="Saunders D."/>
            <person name="Shownkeen R."/>
            <person name="Sims M."/>
            <person name="Smaldon N."/>
            <person name="Smith A."/>
            <person name="Smith M."/>
            <person name="Sonnhammer E."/>
            <person name="Staden R."/>
            <person name="Sulston J."/>
            <person name="Thierry-Mieg J."/>
            <person name="Thomas K."/>
            <person name="Vaudin M."/>
            <person name="Vaughan K."/>
            <person name="Waterston R."/>
            <person name="Watson A."/>
            <person name="Weinstock L."/>
            <person name="Wilkinson-Sproat J."/>
            <person name="Wohldman P."/>
        </authorList>
    </citation>
    <scope>NUCLEOTIDE SEQUENCE [LARGE SCALE GENOMIC DNA]</scope>
    <source>
        <strain>Bristol N2</strain>
    </source>
</reference>
<reference key="2">
    <citation type="journal article" date="1998" name="Science">
        <title>Genome sequence of the nematode C. elegans: a platform for investigating biology.</title>
        <authorList>
            <consortium name="The C. elegans sequencing consortium"/>
        </authorList>
    </citation>
    <scope>NUCLEOTIDE SEQUENCE [LARGE SCALE GENOMIC DNA]</scope>
    <scope>ALTERNATIVE SPLICING</scope>
    <source>
        <strain>Bristol N2</strain>
    </source>
</reference>
<accession>P34675</accession>
<accession>Q8I7F0</accession>
<dbReference type="EMBL" id="FO080277">
    <property type="protein sequence ID" value="CCD62536.1"/>
    <property type="molecule type" value="Genomic_DNA"/>
</dbReference>
<dbReference type="EMBL" id="FO080277">
    <property type="protein sequence ID" value="CCD62537.1"/>
    <property type="molecule type" value="Genomic_DNA"/>
</dbReference>
<dbReference type="PIR" id="S44920">
    <property type="entry name" value="S44920"/>
</dbReference>
<dbReference type="RefSeq" id="NP_498714.1">
    <property type="nucleotide sequence ID" value="NM_066313.5"/>
</dbReference>
<dbReference type="RefSeq" id="NP_871663.1">
    <property type="nucleotide sequence ID" value="NM_181934.4"/>
</dbReference>
<dbReference type="SMR" id="P34675"/>
<dbReference type="BioGRID" id="41315">
    <property type="interactions" value="2"/>
</dbReference>
<dbReference type="FunCoup" id="P34675">
    <property type="interactions" value="1391"/>
</dbReference>
<dbReference type="STRING" id="6239.ZK688.5a.1"/>
<dbReference type="iPTMnet" id="P34675"/>
<dbReference type="PaxDb" id="6239-ZK688.5a"/>
<dbReference type="PeptideAtlas" id="P34675"/>
<dbReference type="EnsemblMetazoa" id="ZK688.5a.1">
    <property type="protein sequence ID" value="ZK688.5a.1"/>
    <property type="gene ID" value="WBGene00022800"/>
</dbReference>
<dbReference type="EnsemblMetazoa" id="ZK688.5b.1">
    <property type="protein sequence ID" value="ZK688.5b.1"/>
    <property type="gene ID" value="WBGene00022800"/>
</dbReference>
<dbReference type="UCSC" id="ZK688.5a">
    <molecule id="P34675-1"/>
    <property type="organism name" value="c. elegans"/>
</dbReference>
<dbReference type="AGR" id="WB:WBGene00022800"/>
<dbReference type="WormBase" id="ZK688.5a">
    <molecule id="P34675-1"/>
    <property type="protein sequence ID" value="CE29166"/>
    <property type="gene ID" value="WBGene00022800"/>
</dbReference>
<dbReference type="WormBase" id="ZK688.5b">
    <molecule id="P34675-2"/>
    <property type="protein sequence ID" value="CE33264"/>
    <property type="gene ID" value="WBGene00022800"/>
</dbReference>
<dbReference type="eggNOG" id="KOG4248">
    <property type="taxonomic scope" value="Eukaryota"/>
</dbReference>
<dbReference type="GeneTree" id="ENSGT00390000016199"/>
<dbReference type="HOGENOM" id="CLU_243574_0_0_1"/>
<dbReference type="InParanoid" id="P34675"/>
<dbReference type="OMA" id="TRHDFAQ"/>
<dbReference type="PRO" id="PR:P34675"/>
<dbReference type="Proteomes" id="UP000001940">
    <property type="component" value="Chromosome III"/>
</dbReference>
<dbReference type="Bgee" id="WBGene00022800">
    <property type="expression patterns" value="Expressed in germ line (C elegans) and 4 other cell types or tissues"/>
</dbReference>
<dbReference type="ExpressionAtlas" id="P34675">
    <property type="expression patterns" value="baseline and differential"/>
</dbReference>
<dbReference type="GO" id="GO:0071818">
    <property type="term" value="C:BAT3 complex"/>
    <property type="evidence" value="ECO:0000318"/>
    <property type="project" value="GO_Central"/>
</dbReference>
<dbReference type="GO" id="GO:0051787">
    <property type="term" value="F:misfolded protein binding"/>
    <property type="evidence" value="ECO:0000318"/>
    <property type="project" value="GO_Central"/>
</dbReference>
<dbReference type="GO" id="GO:0031593">
    <property type="term" value="F:polyubiquitin modification-dependent protein binding"/>
    <property type="evidence" value="ECO:0000318"/>
    <property type="project" value="GO_Central"/>
</dbReference>
<dbReference type="GO" id="GO:0036503">
    <property type="term" value="P:ERAD pathway"/>
    <property type="evidence" value="ECO:0000318"/>
    <property type="project" value="GO_Central"/>
</dbReference>
<dbReference type="GO" id="GO:0007165">
    <property type="term" value="P:signal transduction"/>
    <property type="evidence" value="ECO:0007669"/>
    <property type="project" value="InterPro"/>
</dbReference>
<dbReference type="FunFam" id="3.10.20.90:FF:000470">
    <property type="entry name" value="Protein CBG12265"/>
    <property type="match status" value="1"/>
</dbReference>
<dbReference type="Gene3D" id="3.10.20.90">
    <property type="entry name" value="Phosphatidylinositol 3-kinase Catalytic Subunit, Chain A, domain 1"/>
    <property type="match status" value="1"/>
</dbReference>
<dbReference type="InterPro" id="IPR000488">
    <property type="entry name" value="Death_dom"/>
</dbReference>
<dbReference type="InterPro" id="IPR000626">
    <property type="entry name" value="Ubiquitin-like_dom"/>
</dbReference>
<dbReference type="InterPro" id="IPR029071">
    <property type="entry name" value="Ubiquitin-like_domsf"/>
</dbReference>
<dbReference type="PANTHER" id="PTHR15204">
    <property type="entry name" value="LARGE PROLINE-RICH PROTEIN BAG6"/>
    <property type="match status" value="1"/>
</dbReference>
<dbReference type="PANTHER" id="PTHR15204:SF0">
    <property type="entry name" value="LARGE PROLINE-RICH PROTEIN BAG6"/>
    <property type="match status" value="1"/>
</dbReference>
<dbReference type="Pfam" id="PF00240">
    <property type="entry name" value="ubiquitin"/>
    <property type="match status" value="1"/>
</dbReference>
<dbReference type="SMART" id="SM00005">
    <property type="entry name" value="DEATH"/>
    <property type="match status" value="1"/>
</dbReference>
<dbReference type="SMART" id="SM00213">
    <property type="entry name" value="UBQ"/>
    <property type="match status" value="1"/>
</dbReference>
<dbReference type="SUPFAM" id="SSF54236">
    <property type="entry name" value="Ubiquitin-like"/>
    <property type="match status" value="1"/>
</dbReference>
<dbReference type="PROSITE" id="PS50053">
    <property type="entry name" value="UBIQUITIN_2"/>
    <property type="match status" value="1"/>
</dbReference>
<gene>
    <name type="ORF">ZK688.5</name>
</gene>
<evidence type="ECO:0000255" key="1">
    <source>
        <dbReference type="PROSITE-ProRule" id="PRU00214"/>
    </source>
</evidence>
<evidence type="ECO:0000256" key="2">
    <source>
        <dbReference type="SAM" id="MobiDB-lite"/>
    </source>
</evidence>
<evidence type="ECO:0000305" key="3"/>
<protein>
    <recommendedName>
        <fullName>Uncharacterized protein ZK688.5</fullName>
    </recommendedName>
</protein>
<keyword id="KW-0025">Alternative splicing</keyword>
<keyword id="KW-1185">Reference proteome</keyword>
<comment type="alternative products">
    <event type="alternative splicing"/>
    <isoform>
        <id>P34675-1</id>
        <name>a</name>
        <sequence type="displayed"/>
    </isoform>
    <isoform>
        <id>P34675-2</id>
        <name>b</name>
        <sequence type="described" ref="VSP_017897"/>
    </isoform>
</comment>
<feature type="chain" id="PRO_0000065545" description="Uncharacterized protein ZK688.5">
    <location>
        <begin position="1"/>
        <end position="1620"/>
    </location>
</feature>
<feature type="domain" description="Ubiquitin-like" evidence="1">
    <location>
        <begin position="21"/>
        <end position="96"/>
    </location>
</feature>
<feature type="region of interest" description="Disordered" evidence="2">
    <location>
        <begin position="621"/>
        <end position="648"/>
    </location>
</feature>
<feature type="region of interest" description="Disordered" evidence="2">
    <location>
        <begin position="791"/>
        <end position="810"/>
    </location>
</feature>
<feature type="region of interest" description="Disordered" evidence="2">
    <location>
        <begin position="842"/>
        <end position="874"/>
    </location>
</feature>
<feature type="region of interest" description="Disordered" evidence="2">
    <location>
        <begin position="950"/>
        <end position="1016"/>
    </location>
</feature>
<feature type="region of interest" description="Disordered" evidence="2">
    <location>
        <begin position="1219"/>
        <end position="1260"/>
    </location>
</feature>
<feature type="region of interest" description="Disordered" evidence="2">
    <location>
        <begin position="1537"/>
        <end position="1620"/>
    </location>
</feature>
<feature type="compositionally biased region" description="Acidic residues" evidence="2">
    <location>
        <begin position="799"/>
        <end position="810"/>
    </location>
</feature>
<feature type="compositionally biased region" description="Polar residues" evidence="2">
    <location>
        <begin position="852"/>
        <end position="871"/>
    </location>
</feature>
<feature type="compositionally biased region" description="Polar residues" evidence="2">
    <location>
        <begin position="1225"/>
        <end position="1242"/>
    </location>
</feature>
<feature type="compositionally biased region" description="Low complexity" evidence="2">
    <location>
        <begin position="1537"/>
        <end position="1556"/>
    </location>
</feature>
<feature type="compositionally biased region" description="Low complexity" evidence="2">
    <location>
        <begin position="1583"/>
        <end position="1620"/>
    </location>
</feature>
<feature type="splice variant" id="VSP_017897" description="In isoform b." evidence="3">
    <original>RKRNHDGSREDNDDCVDVVAPMMTSLSTSSPLTSQSSSSGTRTSSGSSGPSTSSTTTNNIQ</original>
    <variation>SLGRLIWTQIRRFFQENAITTAVARIMMTVWMWWHR</variation>
    <location>
        <begin position="1560"/>
        <end position="1620"/>
    </location>
</feature>
<proteinExistence type="predicted"/>
<sequence length="1620" mass="181559">MSETQEQEASGNGEPDLPTTIRVTLKTLDDREATVTIGLQDTIQSLIDLGRREMNIQSGFQRVIAGGRVLNSTQTVQAAGISDGQTVHLVDRGPSGENDRPNVMPDRVAGPRIINAIPGLPPPGFIFQSPAFARMIPGNVEIPTPPSQTQHTVVHPIRVPGSIAGTPVLTSRVSEDCVLQKAVPYRGTSNSPNRPQAASQTVTFPSEPNVIQWTVNIADDLIFRPREHFEQVVRETINNISFLSDSTRLGVSMKWNQNCTSLSVELPPVSPHIPSPALEKLDFLCLWTDHLSRFIDKLEEHDGLVAATRHVLEMVKTRQFDQNLSQQARNQRVEALDEIVKHLEYQWAELSHMKDFERIRFRKNQTEEYRALKIQEYPETPRNPHFYMRHALDIDVIGVMREFRKQQRRFTRLEDLLDDLNEVGAVKFIRDHITTEVDYRYQALSMFYCYIQRMRHQISHMTHLTADLDVSFITPSFPQRILPQYAFQSSDEQPLTIPVTHIFEPPRMLSDVGGRYNGDYPYLAYHPPSVHMEVVLQEPRRIAEPRPQILARPTPQQFVLTQEMNQGGSINLMAATDPISGLSLQDVLRAQQEQVENLFAQQPGIEGGRVRVTARPGRRFVATTGDAPSVPVETLPPPGSDQQPGTSRRFTTHRFNVQPDARGAETETLAPFPVAIEPNELQRIAKNIASRYRAEALQRIASSLTTRFNNESWDTRIQNMPLCTLRECVAIALEMLTSAGNTVNESKDLMLALVRDEEVLVRAIAECIKSLFGRGEFPTHVARLIMPTNQTASSRNDYESVDGVEESQSDEFDSMIVRVPSDISQPQSGDLRAIRERRQNRRQFLENRGRIPSTSSAPSTSENPPGPSFNSEDAADIRAGRLPLGTRPNRRTVRETVHPAAAARAESPNHISLTFTATTHTFAPAGFPLMMASSNVPSTSAGPPGWPIRQVVSPTPTTRGLFEFDLSGSSDQPARSTPSPPAPTPRTTSAPATVQSSPTRQESMDIDSPNVQNPGHVESPAAIAARQAARVARARIDHLAATFNGDLADSRRQSPFVTPGPTTPLNDPRRRTVRVTQHVKPMVAIDPFMNCTNRHCEINRLATPTHMADGDRFTLQSLQPDQEFEARIQALVPSIERRPIQIHHEDEDYNYSIRRTQSGLLSFRNLEDFRPFVKTAIRSLLAHCIDADTLFTMNMNNISGYQAANHTELLRMVKEHISRVPGSRATRNASQNTTSVNQSTETSPREQMNRSPVQEAADPRLAFSPFPPGINLEQEVLIPGQIASLLTYLVDYMESSSNPRPPGIFGFLLELTYGRLTRHDFAQLARRTTATNVASEFEAQIRAHIRDNYLVGRTGLSNSELHGIAENLANNEQFFAIFMSQNDQLPTSFPFGYDRNDFAEVVWAFRQIEIALIKSFLTLSQLNLDSGNAVRFILQSVDSYLYRNLIMFYRMCDRDVERMKIQMKRISDYFATIRYESTDRPGINVFIDNWNRVMDYWSNRYTDFSEENFDQFLLKVRAGTDWNDIVLNESRQLLPTIASTSSQPSTSSSSLNTVSTNNPRKRNHDGSREDNDDCVDVVAPMMTSLSTSSPLTSQSSSSGTRTSSGSSGPSTSSTTTNNIQ</sequence>